<gene>
    <name evidence="1" type="primary">obg</name>
    <name type="ordered locus">Krad_3455</name>
</gene>
<comment type="function">
    <text evidence="1">An essential GTPase which binds GTP, GDP and possibly (p)ppGpp with moderate affinity, with high nucleotide exchange rates and a fairly low GTP hydrolysis rate. Plays a role in control of the cell cycle, stress response, ribosome biogenesis and in those bacteria that undergo differentiation, in morphogenesis control.</text>
</comment>
<comment type="cofactor">
    <cofactor evidence="1">
        <name>Mg(2+)</name>
        <dbReference type="ChEBI" id="CHEBI:18420"/>
    </cofactor>
</comment>
<comment type="subunit">
    <text evidence="1">Monomer.</text>
</comment>
<comment type="subcellular location">
    <subcellularLocation>
        <location evidence="1">Cytoplasm</location>
    </subcellularLocation>
</comment>
<comment type="similarity">
    <text evidence="1">Belongs to the TRAFAC class OBG-HflX-like GTPase superfamily. OBG GTPase family.</text>
</comment>
<dbReference type="EC" id="3.6.5.-" evidence="1"/>
<dbReference type="EMBL" id="CP000750">
    <property type="protein sequence ID" value="ABS04918.1"/>
    <property type="molecule type" value="Genomic_DNA"/>
</dbReference>
<dbReference type="RefSeq" id="WP_012086822.1">
    <property type="nucleotide sequence ID" value="NC_009664.2"/>
</dbReference>
<dbReference type="SMR" id="A6WDM9"/>
<dbReference type="STRING" id="266940.Krad_3455"/>
<dbReference type="KEGG" id="kra:Krad_3455"/>
<dbReference type="eggNOG" id="COG0536">
    <property type="taxonomic scope" value="Bacteria"/>
</dbReference>
<dbReference type="HOGENOM" id="CLU_011747_1_1_11"/>
<dbReference type="OrthoDB" id="9807318at2"/>
<dbReference type="Proteomes" id="UP000001116">
    <property type="component" value="Chromosome"/>
</dbReference>
<dbReference type="GO" id="GO:0005737">
    <property type="term" value="C:cytoplasm"/>
    <property type="evidence" value="ECO:0007669"/>
    <property type="project" value="UniProtKB-SubCell"/>
</dbReference>
<dbReference type="GO" id="GO:0005525">
    <property type="term" value="F:GTP binding"/>
    <property type="evidence" value="ECO:0007669"/>
    <property type="project" value="UniProtKB-UniRule"/>
</dbReference>
<dbReference type="GO" id="GO:0003924">
    <property type="term" value="F:GTPase activity"/>
    <property type="evidence" value="ECO:0007669"/>
    <property type="project" value="UniProtKB-UniRule"/>
</dbReference>
<dbReference type="GO" id="GO:0000287">
    <property type="term" value="F:magnesium ion binding"/>
    <property type="evidence" value="ECO:0007669"/>
    <property type="project" value="InterPro"/>
</dbReference>
<dbReference type="GO" id="GO:0042254">
    <property type="term" value="P:ribosome biogenesis"/>
    <property type="evidence" value="ECO:0007669"/>
    <property type="project" value="UniProtKB-UniRule"/>
</dbReference>
<dbReference type="CDD" id="cd01898">
    <property type="entry name" value="Obg"/>
    <property type="match status" value="1"/>
</dbReference>
<dbReference type="FunFam" id="2.70.210.12:FF:000001">
    <property type="entry name" value="GTPase Obg"/>
    <property type="match status" value="1"/>
</dbReference>
<dbReference type="Gene3D" id="3.30.300.350">
    <property type="entry name" value="GTP-binding protein OBG, C-terminal domain"/>
    <property type="match status" value="1"/>
</dbReference>
<dbReference type="Gene3D" id="2.70.210.12">
    <property type="entry name" value="GTP1/OBG domain"/>
    <property type="match status" value="1"/>
</dbReference>
<dbReference type="Gene3D" id="3.40.50.300">
    <property type="entry name" value="P-loop containing nucleotide triphosphate hydrolases"/>
    <property type="match status" value="1"/>
</dbReference>
<dbReference type="HAMAP" id="MF_01454">
    <property type="entry name" value="GTPase_Obg"/>
    <property type="match status" value="1"/>
</dbReference>
<dbReference type="InterPro" id="IPR031167">
    <property type="entry name" value="G_OBG"/>
</dbReference>
<dbReference type="InterPro" id="IPR006073">
    <property type="entry name" value="GTP-bd"/>
</dbReference>
<dbReference type="InterPro" id="IPR014100">
    <property type="entry name" value="GTP-bd_Obg/CgtA"/>
</dbReference>
<dbReference type="InterPro" id="IPR036346">
    <property type="entry name" value="GTP-bd_prot_GTP1/OBG_C_sf"/>
</dbReference>
<dbReference type="InterPro" id="IPR006074">
    <property type="entry name" value="GTP1-OBG_CS"/>
</dbReference>
<dbReference type="InterPro" id="IPR006169">
    <property type="entry name" value="GTP1_OBG_dom"/>
</dbReference>
<dbReference type="InterPro" id="IPR036726">
    <property type="entry name" value="GTP1_OBG_dom_sf"/>
</dbReference>
<dbReference type="InterPro" id="IPR045086">
    <property type="entry name" value="OBG_GTPase"/>
</dbReference>
<dbReference type="InterPro" id="IPR015349">
    <property type="entry name" value="OCT_dom"/>
</dbReference>
<dbReference type="InterPro" id="IPR027417">
    <property type="entry name" value="P-loop_NTPase"/>
</dbReference>
<dbReference type="NCBIfam" id="TIGR02729">
    <property type="entry name" value="Obg_CgtA"/>
    <property type="match status" value="1"/>
</dbReference>
<dbReference type="NCBIfam" id="TIGR03595">
    <property type="entry name" value="Obg_CgtA_exten"/>
    <property type="match status" value="1"/>
</dbReference>
<dbReference type="NCBIfam" id="NF008954">
    <property type="entry name" value="PRK12296.1"/>
    <property type="match status" value="1"/>
</dbReference>
<dbReference type="NCBIfam" id="NF008955">
    <property type="entry name" value="PRK12297.1"/>
    <property type="match status" value="1"/>
</dbReference>
<dbReference type="NCBIfam" id="NF008956">
    <property type="entry name" value="PRK12299.1"/>
    <property type="match status" value="1"/>
</dbReference>
<dbReference type="PANTHER" id="PTHR11702">
    <property type="entry name" value="DEVELOPMENTALLY REGULATED GTP-BINDING PROTEIN-RELATED"/>
    <property type="match status" value="1"/>
</dbReference>
<dbReference type="PANTHER" id="PTHR11702:SF31">
    <property type="entry name" value="MITOCHONDRIAL RIBOSOME-ASSOCIATED GTPASE 2"/>
    <property type="match status" value="1"/>
</dbReference>
<dbReference type="Pfam" id="PF09269">
    <property type="entry name" value="DUF1967"/>
    <property type="match status" value="1"/>
</dbReference>
<dbReference type="Pfam" id="PF01018">
    <property type="entry name" value="GTP1_OBG"/>
    <property type="match status" value="1"/>
</dbReference>
<dbReference type="Pfam" id="PF01926">
    <property type="entry name" value="MMR_HSR1"/>
    <property type="match status" value="1"/>
</dbReference>
<dbReference type="PRINTS" id="PR00326">
    <property type="entry name" value="GTP1OBG"/>
</dbReference>
<dbReference type="SUPFAM" id="SSF102741">
    <property type="entry name" value="Obg GTP-binding protein C-terminal domain"/>
    <property type="match status" value="1"/>
</dbReference>
<dbReference type="SUPFAM" id="SSF82051">
    <property type="entry name" value="Obg GTP-binding protein N-terminal domain"/>
    <property type="match status" value="1"/>
</dbReference>
<dbReference type="SUPFAM" id="SSF52540">
    <property type="entry name" value="P-loop containing nucleoside triphosphate hydrolases"/>
    <property type="match status" value="1"/>
</dbReference>
<dbReference type="PROSITE" id="PS51710">
    <property type="entry name" value="G_OBG"/>
    <property type="match status" value="1"/>
</dbReference>
<dbReference type="PROSITE" id="PS00905">
    <property type="entry name" value="GTP1_OBG"/>
    <property type="match status" value="1"/>
</dbReference>
<dbReference type="PROSITE" id="PS51883">
    <property type="entry name" value="OBG"/>
    <property type="match status" value="1"/>
</dbReference>
<dbReference type="PROSITE" id="PS51881">
    <property type="entry name" value="OCT"/>
    <property type="match status" value="1"/>
</dbReference>
<protein>
    <recommendedName>
        <fullName evidence="1">GTPase Obg</fullName>
        <ecNumber evidence="1">3.6.5.-</ecNumber>
    </recommendedName>
    <alternativeName>
        <fullName evidence="1">GTP-binding protein Obg</fullName>
    </alternativeName>
</protein>
<evidence type="ECO:0000255" key="1">
    <source>
        <dbReference type="HAMAP-Rule" id="MF_01454"/>
    </source>
</evidence>
<evidence type="ECO:0000255" key="2">
    <source>
        <dbReference type="PROSITE-ProRule" id="PRU01229"/>
    </source>
</evidence>
<evidence type="ECO:0000255" key="3">
    <source>
        <dbReference type="PROSITE-ProRule" id="PRU01231"/>
    </source>
</evidence>
<evidence type="ECO:0000256" key="4">
    <source>
        <dbReference type="SAM" id="MobiDB-lite"/>
    </source>
</evidence>
<sequence>MSTHFVDRVVVHASGGDGGNGCASVHREKFKPLGGPDGGNGGKGGDVILEVDPQVTTLLDLQRRPHRSAPDGRFGMGSHRNGADGDDLVIGVPDGTIVRSASGELLADLVGPGTRYVAAPGGRGGLGNAALASAKRKAPGFALLGEPGEVLDLHLEVKTLADVALVGFPSAGKSSLVAALSAARPKIADYPFTTLVPNLGVVEAGSTRYTVADVPGLIPGASEGRGLGLDFLRHVERCVALVHVLDGANLETDRDPVSDLEAIEKELAAYRVDDGAVPLQDRPRIIVINKADVPDARDMAEIVRADLEEQGAPVFVVSAVAHTGLRELSFAMAELVSAARAAEPEAVPTRIVLSPRAVDDQGFKVTREEYGDQENRQVRFRVRGEKPRRWVRQTDFTNDEAVGYLADRLARLGVEDELFKAGATPGAEVVIGDDANAVVFDWEPTMHAGAEVLGQRGSDLRLEDHSRPTRDEKRLQERERRAAKVTARDELEAERRAGHWTAADEADEELSQR</sequence>
<keyword id="KW-0963">Cytoplasm</keyword>
<keyword id="KW-0342">GTP-binding</keyword>
<keyword id="KW-0378">Hydrolase</keyword>
<keyword id="KW-0460">Magnesium</keyword>
<keyword id="KW-0479">Metal-binding</keyword>
<keyword id="KW-0547">Nucleotide-binding</keyword>
<keyword id="KW-1185">Reference proteome</keyword>
<reference key="1">
    <citation type="journal article" date="2008" name="PLoS ONE">
        <title>Survival in nuclear waste, extreme resistance, and potential applications gleaned from the genome sequence of Kineococcus radiotolerans SRS30216.</title>
        <authorList>
            <person name="Bagwell C.E."/>
            <person name="Bhat S."/>
            <person name="Hawkins G.M."/>
            <person name="Smith B.W."/>
            <person name="Biswas T."/>
            <person name="Hoover T.R."/>
            <person name="Saunders E."/>
            <person name="Han C.S."/>
            <person name="Tsodikov O.V."/>
            <person name="Shimkets L.J."/>
        </authorList>
    </citation>
    <scope>NUCLEOTIDE SEQUENCE [LARGE SCALE GENOMIC DNA]</scope>
    <source>
        <strain>ATCC BAA-149 / DSM 14245 / SRS30216</strain>
    </source>
</reference>
<name>OBG_KINRD</name>
<organism>
    <name type="scientific">Kineococcus radiotolerans (strain ATCC BAA-149 / DSM 14245 / SRS30216)</name>
    <dbReference type="NCBI Taxonomy" id="266940"/>
    <lineage>
        <taxon>Bacteria</taxon>
        <taxon>Bacillati</taxon>
        <taxon>Actinomycetota</taxon>
        <taxon>Actinomycetes</taxon>
        <taxon>Kineosporiales</taxon>
        <taxon>Kineosporiaceae</taxon>
        <taxon>Kineococcus</taxon>
    </lineage>
</organism>
<proteinExistence type="inferred from homology"/>
<feature type="chain" id="PRO_0000385985" description="GTPase Obg">
    <location>
        <begin position="1"/>
        <end position="513"/>
    </location>
</feature>
<feature type="domain" description="Obg" evidence="3">
    <location>
        <begin position="3"/>
        <end position="160"/>
    </location>
</feature>
<feature type="domain" description="OBG-type G" evidence="1">
    <location>
        <begin position="161"/>
        <end position="337"/>
    </location>
</feature>
<feature type="domain" description="OCT" evidence="2">
    <location>
        <begin position="355"/>
        <end position="444"/>
    </location>
</feature>
<feature type="region of interest" description="Disordered" evidence="4">
    <location>
        <begin position="457"/>
        <end position="513"/>
    </location>
</feature>
<feature type="compositionally biased region" description="Basic and acidic residues" evidence="4">
    <location>
        <begin position="458"/>
        <end position="497"/>
    </location>
</feature>
<feature type="compositionally biased region" description="Acidic residues" evidence="4">
    <location>
        <begin position="504"/>
        <end position="513"/>
    </location>
</feature>
<feature type="binding site" evidence="1">
    <location>
        <begin position="167"/>
        <end position="174"/>
    </location>
    <ligand>
        <name>GTP</name>
        <dbReference type="ChEBI" id="CHEBI:37565"/>
    </ligand>
</feature>
<feature type="binding site" evidence="1">
    <location>
        <position position="174"/>
    </location>
    <ligand>
        <name>Mg(2+)</name>
        <dbReference type="ChEBI" id="CHEBI:18420"/>
    </ligand>
</feature>
<feature type="binding site" evidence="1">
    <location>
        <begin position="192"/>
        <end position="196"/>
    </location>
    <ligand>
        <name>GTP</name>
        <dbReference type="ChEBI" id="CHEBI:37565"/>
    </ligand>
</feature>
<feature type="binding site" evidence="1">
    <location>
        <position position="194"/>
    </location>
    <ligand>
        <name>Mg(2+)</name>
        <dbReference type="ChEBI" id="CHEBI:18420"/>
    </ligand>
</feature>
<feature type="binding site" evidence="1">
    <location>
        <begin position="213"/>
        <end position="216"/>
    </location>
    <ligand>
        <name>GTP</name>
        <dbReference type="ChEBI" id="CHEBI:37565"/>
    </ligand>
</feature>
<feature type="binding site" evidence="1">
    <location>
        <begin position="289"/>
        <end position="292"/>
    </location>
    <ligand>
        <name>GTP</name>
        <dbReference type="ChEBI" id="CHEBI:37565"/>
    </ligand>
</feature>
<feature type="binding site" evidence="1">
    <location>
        <begin position="318"/>
        <end position="320"/>
    </location>
    <ligand>
        <name>GTP</name>
        <dbReference type="ChEBI" id="CHEBI:37565"/>
    </ligand>
</feature>
<accession>A6WDM9</accession>